<name>CH19_DROGR</name>
<evidence type="ECO:0000250" key="1"/>
<evidence type="ECO:0000255" key="2"/>
<evidence type="ECO:0000305" key="3"/>
<keyword id="KW-0964">Secreted</keyword>
<keyword id="KW-0732">Signal</keyword>
<reference key="1">
    <citation type="journal article" date="1988" name="Genetics">
        <title>Evolution of the autosomal chorion locus in Drosophila. I. General organization of the locus and sequence comparisons of genes s15 and s19 in evolutionary distant species.</title>
        <authorList>
            <person name="Martinez-Cruzado J.C."/>
            <person name="Swimmer C."/>
            <person name="Fenerjian M.G."/>
            <person name="Kafatos F.C."/>
        </authorList>
    </citation>
    <scope>NUCLEOTIDE SEQUENCE [GENOMIC DNA]</scope>
</reference>
<protein>
    <recommendedName>
        <fullName>Chorion protein S19</fullName>
    </recommendedName>
</protein>
<accession>P13427</accession>
<comment type="function">
    <text evidence="1">Chorion membrane (egg shell) protein; plays a role in protecting the egg from the environment.</text>
</comment>
<comment type="subcellular location">
    <subcellularLocation>
        <location evidence="3">Secreted</location>
    </subcellularLocation>
</comment>
<comment type="similarity">
    <text evidence="3">Belongs to the chorion protein S19 family.</text>
</comment>
<dbReference type="EMBL" id="X53422">
    <property type="protein sequence ID" value="CAA37506.1"/>
    <property type="molecule type" value="Genomic_DNA"/>
</dbReference>
<dbReference type="PIR" id="S06613">
    <property type="entry name" value="S06613"/>
</dbReference>
<dbReference type="EnsemblMetazoa" id="FBtr0470971">
    <property type="protein sequence ID" value="FBpp0421020"/>
    <property type="gene ID" value="FBgn0285282"/>
</dbReference>
<dbReference type="EnsemblMetazoa" id="XM_032743386.2">
    <property type="protein sequence ID" value="XP_032599277.1"/>
    <property type="gene ID" value="LOC116806527"/>
</dbReference>
<dbReference type="eggNOG" id="ENOG502S3GF">
    <property type="taxonomic scope" value="Eukaryota"/>
</dbReference>
<dbReference type="OrthoDB" id="7859712at2759"/>
<dbReference type="GO" id="GO:0042600">
    <property type="term" value="C:egg chorion"/>
    <property type="evidence" value="ECO:0007669"/>
    <property type="project" value="InterPro"/>
</dbReference>
<dbReference type="GO" id="GO:0005576">
    <property type="term" value="C:extracellular region"/>
    <property type="evidence" value="ECO:0007669"/>
    <property type="project" value="UniProtKB-SubCell"/>
</dbReference>
<dbReference type="GO" id="GO:0007304">
    <property type="term" value="P:chorion-containing eggshell formation"/>
    <property type="evidence" value="ECO:0007669"/>
    <property type="project" value="EnsemblMetazoa"/>
</dbReference>
<dbReference type="InterPro" id="IPR005649">
    <property type="entry name" value="Chorion_2"/>
</dbReference>
<dbReference type="Pfam" id="PF03964">
    <property type="entry name" value="Chorion_2"/>
    <property type="match status" value="1"/>
</dbReference>
<gene>
    <name type="primary">Cp19</name>
    <name type="synonym">S19</name>
</gene>
<sequence length="196" mass="19826">MNTFATLAIFISACLAVGSCGGYGSPIGYGGPINVGLRRVSSIGQQSGDGAAAASAAASGGDNGPVEIIAGGAPRYGSSQNLRPILLNSGYHGGLNDNIGRIAQIVGGGRSLGGHLGGHLGGHLGGRIGGNYGGRYIRPRFTVQPAGATLLYPGQNSYRRISSPVEYSKVILPVRAAAPVAKLYIPQNNYGSQVGY</sequence>
<feature type="signal peptide" evidence="2">
    <location>
        <begin position="1"/>
        <end position="16"/>
    </location>
</feature>
<feature type="chain" id="PRO_0000089624" description="Chorion protein S19">
    <location>
        <begin position="17"/>
        <end position="196"/>
    </location>
</feature>
<proteinExistence type="inferred from homology"/>
<organism>
    <name type="scientific">Drosophila grimshawi</name>
    <name type="common">Hawaiian fruit fly</name>
    <name type="synonym">Idiomyia grimshawi</name>
    <dbReference type="NCBI Taxonomy" id="7222"/>
    <lineage>
        <taxon>Eukaryota</taxon>
        <taxon>Metazoa</taxon>
        <taxon>Ecdysozoa</taxon>
        <taxon>Arthropoda</taxon>
        <taxon>Hexapoda</taxon>
        <taxon>Insecta</taxon>
        <taxon>Pterygota</taxon>
        <taxon>Neoptera</taxon>
        <taxon>Endopterygota</taxon>
        <taxon>Diptera</taxon>
        <taxon>Brachycera</taxon>
        <taxon>Muscomorpha</taxon>
        <taxon>Ephydroidea</taxon>
        <taxon>Drosophilidae</taxon>
        <taxon>Drosophila</taxon>
        <taxon>Hawaiian Drosophila</taxon>
    </lineage>
</organism>